<dbReference type="EC" id="2.5.1.145" evidence="1"/>
<dbReference type="EMBL" id="AM999887">
    <property type="protein sequence ID" value="CAQ54616.1"/>
    <property type="molecule type" value="Genomic_DNA"/>
</dbReference>
<dbReference type="RefSeq" id="WP_007301947.1">
    <property type="nucleotide sequence ID" value="NC_010981.1"/>
</dbReference>
<dbReference type="SMR" id="B3CPW3"/>
<dbReference type="KEGG" id="wpi:WP0508"/>
<dbReference type="eggNOG" id="COG0682">
    <property type="taxonomic scope" value="Bacteria"/>
</dbReference>
<dbReference type="HOGENOM" id="CLU_013386_1_0_5"/>
<dbReference type="UniPathway" id="UPA00664"/>
<dbReference type="Proteomes" id="UP000008814">
    <property type="component" value="Chromosome"/>
</dbReference>
<dbReference type="GO" id="GO:0005886">
    <property type="term" value="C:plasma membrane"/>
    <property type="evidence" value="ECO:0007669"/>
    <property type="project" value="UniProtKB-SubCell"/>
</dbReference>
<dbReference type="GO" id="GO:0008961">
    <property type="term" value="F:phosphatidylglycerol-prolipoprotein diacylglyceryl transferase activity"/>
    <property type="evidence" value="ECO:0007669"/>
    <property type="project" value="UniProtKB-UniRule"/>
</dbReference>
<dbReference type="GO" id="GO:0042158">
    <property type="term" value="P:lipoprotein biosynthetic process"/>
    <property type="evidence" value="ECO:0007669"/>
    <property type="project" value="UniProtKB-UniRule"/>
</dbReference>
<dbReference type="HAMAP" id="MF_01147">
    <property type="entry name" value="Lgt"/>
    <property type="match status" value="1"/>
</dbReference>
<dbReference type="InterPro" id="IPR001640">
    <property type="entry name" value="Lgt"/>
</dbReference>
<dbReference type="NCBIfam" id="TIGR00544">
    <property type="entry name" value="lgt"/>
    <property type="match status" value="1"/>
</dbReference>
<dbReference type="PANTHER" id="PTHR30589:SF0">
    <property type="entry name" value="PHOSPHATIDYLGLYCEROL--PROLIPOPROTEIN DIACYLGLYCERYL TRANSFERASE"/>
    <property type="match status" value="1"/>
</dbReference>
<dbReference type="PANTHER" id="PTHR30589">
    <property type="entry name" value="PROLIPOPROTEIN DIACYLGLYCERYL TRANSFERASE"/>
    <property type="match status" value="1"/>
</dbReference>
<dbReference type="Pfam" id="PF01790">
    <property type="entry name" value="LGT"/>
    <property type="match status" value="1"/>
</dbReference>
<dbReference type="PROSITE" id="PS01311">
    <property type="entry name" value="LGT"/>
    <property type="match status" value="1"/>
</dbReference>
<protein>
    <recommendedName>
        <fullName evidence="1">Phosphatidylglycerol--prolipoprotein diacylglyceryl transferase</fullName>
        <ecNumber evidence="1">2.5.1.145</ecNumber>
    </recommendedName>
</protein>
<accession>B3CPW3</accession>
<sequence length="263" mass="29760">MSLSPVIFSIGPVSIYWYSLAYVLGIVFAYWYLHKLDNQKIFTKNFYDSLLTAVIIGIILGGRLGYVLIYDPVLYISNPIEILKTWEGGMSFHGGAIGVLLAVIISCRRHNIPIFYTLDLISCGVPIGLLLGRIGNFINGELFGRVTTMPWGMVFPESGDNLLRHPSQLYEAFFEGALLFVVVNSLFYLNKMRLYYGATTGVAVMLYGVARFMVEFFREPDYQIGYLWFNLTMGQLLSIPMILLGMLIYLGALNFRFNTKSIQ</sequence>
<feature type="chain" id="PRO_1000137471" description="Phosphatidylglycerol--prolipoprotein diacylglyceryl transferase">
    <location>
        <begin position="1"/>
        <end position="263"/>
    </location>
</feature>
<feature type="transmembrane region" description="Helical" evidence="1">
    <location>
        <begin position="6"/>
        <end position="26"/>
    </location>
</feature>
<feature type="transmembrane region" description="Helical" evidence="1">
    <location>
        <begin position="50"/>
        <end position="70"/>
    </location>
</feature>
<feature type="transmembrane region" description="Helical" evidence="1">
    <location>
        <begin position="85"/>
        <end position="105"/>
    </location>
</feature>
<feature type="transmembrane region" description="Helical" evidence="1">
    <location>
        <begin position="112"/>
        <end position="132"/>
    </location>
</feature>
<feature type="transmembrane region" description="Helical" evidence="1">
    <location>
        <begin position="169"/>
        <end position="189"/>
    </location>
</feature>
<feature type="transmembrane region" description="Helical" evidence="1">
    <location>
        <begin position="197"/>
        <end position="217"/>
    </location>
</feature>
<feature type="transmembrane region" description="Helical" evidence="1">
    <location>
        <begin position="233"/>
        <end position="253"/>
    </location>
</feature>
<feature type="binding site" evidence="1">
    <location>
        <position position="133"/>
    </location>
    <ligand>
        <name>a 1,2-diacyl-sn-glycero-3-phospho-(1'-sn-glycerol)</name>
        <dbReference type="ChEBI" id="CHEBI:64716"/>
    </ligand>
</feature>
<proteinExistence type="inferred from homology"/>
<keyword id="KW-1003">Cell membrane</keyword>
<keyword id="KW-0472">Membrane</keyword>
<keyword id="KW-0808">Transferase</keyword>
<keyword id="KW-0812">Transmembrane</keyword>
<keyword id="KW-1133">Transmembrane helix</keyword>
<gene>
    <name evidence="1" type="primary">lgt</name>
    <name type="ordered locus">WP0508</name>
</gene>
<evidence type="ECO:0000255" key="1">
    <source>
        <dbReference type="HAMAP-Rule" id="MF_01147"/>
    </source>
</evidence>
<reference key="1">
    <citation type="journal article" date="2008" name="Mol. Biol. Evol.">
        <title>Genome evolution of Wolbachia strain wPip from the Culex pipiens group.</title>
        <authorList>
            <person name="Klasson L."/>
            <person name="Walker T."/>
            <person name="Sebaihia M."/>
            <person name="Sanders M.J."/>
            <person name="Quail M.A."/>
            <person name="Lord A."/>
            <person name="Sanders S."/>
            <person name="Earl J."/>
            <person name="O'Neill S.L."/>
            <person name="Thomson N."/>
            <person name="Sinkins S.P."/>
            <person name="Parkhill J."/>
        </authorList>
    </citation>
    <scope>NUCLEOTIDE SEQUENCE [LARGE SCALE GENOMIC DNA]</scope>
    <source>
        <strain>wPip</strain>
    </source>
</reference>
<organism>
    <name type="scientific">Wolbachia pipientis subsp. Culex pipiens (strain wPip)</name>
    <dbReference type="NCBI Taxonomy" id="570417"/>
    <lineage>
        <taxon>Bacteria</taxon>
        <taxon>Pseudomonadati</taxon>
        <taxon>Pseudomonadota</taxon>
        <taxon>Alphaproteobacteria</taxon>
        <taxon>Rickettsiales</taxon>
        <taxon>Anaplasmataceae</taxon>
        <taxon>Wolbachieae</taxon>
        <taxon>Wolbachia</taxon>
    </lineage>
</organism>
<comment type="function">
    <text evidence="1">Catalyzes the transfer of the diacylglyceryl group from phosphatidylglycerol to the sulfhydryl group of the N-terminal cysteine of a prolipoprotein, the first step in the formation of mature lipoproteins.</text>
</comment>
<comment type="catalytic activity">
    <reaction evidence="1">
        <text>L-cysteinyl-[prolipoprotein] + a 1,2-diacyl-sn-glycero-3-phospho-(1'-sn-glycerol) = an S-1,2-diacyl-sn-glyceryl-L-cysteinyl-[prolipoprotein] + sn-glycerol 1-phosphate + H(+)</text>
        <dbReference type="Rhea" id="RHEA:56712"/>
        <dbReference type="Rhea" id="RHEA-COMP:14679"/>
        <dbReference type="Rhea" id="RHEA-COMP:14680"/>
        <dbReference type="ChEBI" id="CHEBI:15378"/>
        <dbReference type="ChEBI" id="CHEBI:29950"/>
        <dbReference type="ChEBI" id="CHEBI:57685"/>
        <dbReference type="ChEBI" id="CHEBI:64716"/>
        <dbReference type="ChEBI" id="CHEBI:140658"/>
        <dbReference type="EC" id="2.5.1.145"/>
    </reaction>
</comment>
<comment type="pathway">
    <text evidence="1">Protein modification; lipoprotein biosynthesis (diacylglyceryl transfer).</text>
</comment>
<comment type="subcellular location">
    <subcellularLocation>
        <location evidence="1">Cell membrane</location>
        <topology evidence="1">Multi-pass membrane protein</topology>
    </subcellularLocation>
</comment>
<comment type="similarity">
    <text evidence="1">Belongs to the Lgt family.</text>
</comment>
<name>LGT_WOLPP</name>